<reference key="1">
    <citation type="journal article" date="1981" name="J. Mol. Biol.">
        <title>Control of leu operon expression in Escherichia coli by a transcription attenuation mechanism.</title>
        <authorList>
            <person name="Wessler S.R."/>
            <person name="Calvo J.M."/>
        </authorList>
    </citation>
    <scope>NUCLEOTIDE SEQUENCE [GENOMIC DNA]</scope>
    <source>
        <strain>K12</strain>
    </source>
</reference>
<reference key="2">
    <citation type="journal article" date="1992" name="Nucleic Acids Res.">
        <title>Systematic sequencing of the Escherichia coli genome: analysis of the 0-2.4 min region.</title>
        <authorList>
            <person name="Yura T."/>
            <person name="Mori H."/>
            <person name="Nagai H."/>
            <person name="Nagata T."/>
            <person name="Ishihama A."/>
            <person name="Fujita N."/>
            <person name="Isono K."/>
            <person name="Mizobuchi K."/>
            <person name="Nakata A."/>
        </authorList>
    </citation>
    <scope>NUCLEOTIDE SEQUENCE [LARGE SCALE GENOMIC DNA]</scope>
    <source>
        <strain>K12</strain>
    </source>
</reference>
<reference key="3">
    <citation type="journal article" date="1997" name="Science">
        <title>The complete genome sequence of Escherichia coli K-12.</title>
        <authorList>
            <person name="Blattner F.R."/>
            <person name="Plunkett G. III"/>
            <person name="Bloch C.A."/>
            <person name="Perna N.T."/>
            <person name="Burland V."/>
            <person name="Riley M."/>
            <person name="Collado-Vides J."/>
            <person name="Glasner J.D."/>
            <person name="Rode C.K."/>
            <person name="Mayhew G.F."/>
            <person name="Gregor J."/>
            <person name="Davis N.W."/>
            <person name="Kirkpatrick H.A."/>
            <person name="Goeden M.A."/>
            <person name="Rose D.J."/>
            <person name="Mau B."/>
            <person name="Shao Y."/>
        </authorList>
    </citation>
    <scope>NUCLEOTIDE SEQUENCE [LARGE SCALE GENOMIC DNA]</scope>
    <source>
        <strain>K12 / MG1655 / ATCC 47076</strain>
    </source>
</reference>
<reference key="4">
    <citation type="journal article" date="2006" name="Mol. Syst. Biol.">
        <title>Highly accurate genome sequences of Escherichia coli K-12 strains MG1655 and W3110.</title>
        <authorList>
            <person name="Hayashi K."/>
            <person name="Morooka N."/>
            <person name="Yamamoto Y."/>
            <person name="Fujita K."/>
            <person name="Isono K."/>
            <person name="Choi S."/>
            <person name="Ohtsubo E."/>
            <person name="Baba T."/>
            <person name="Wanner B.L."/>
            <person name="Mori H."/>
            <person name="Horiuchi T."/>
        </authorList>
    </citation>
    <scope>NUCLEOTIDE SEQUENCE [LARGE SCALE GENOMIC DNA]</scope>
    <source>
        <strain>K12 / W3110 / ATCC 27325 / DSM 5911</strain>
    </source>
</reference>
<dbReference type="EMBL" id="J01642">
    <property type="protein sequence ID" value="AAA24065.1"/>
    <property type="molecule type" value="Genomic_DNA"/>
</dbReference>
<dbReference type="EMBL" id="X55034">
    <property type="protein sequence ID" value="CAA38852.1"/>
    <property type="molecule type" value="Genomic_DNA"/>
</dbReference>
<dbReference type="EMBL" id="U00096">
    <property type="protein sequence ID" value="AAC73186.1"/>
    <property type="molecule type" value="Genomic_DNA"/>
</dbReference>
<dbReference type="EMBL" id="AP009048">
    <property type="protein sequence ID" value="BAB96644.1"/>
    <property type="molecule type" value="Genomic_DNA"/>
</dbReference>
<dbReference type="PIR" id="A30376">
    <property type="entry name" value="LFECL"/>
</dbReference>
<dbReference type="RefSeq" id="NP_414617.1">
    <property type="nucleotide sequence ID" value="NC_000913.3"/>
</dbReference>
<dbReference type="RefSeq" id="WP_001300467.1">
    <property type="nucleotide sequence ID" value="NZ_STEB01000010.1"/>
</dbReference>
<dbReference type="FunCoup" id="P0AD79">
    <property type="interactions" value="7"/>
</dbReference>
<dbReference type="STRING" id="511145.b0075"/>
<dbReference type="PaxDb" id="511145-b0075"/>
<dbReference type="EnsemblBacteria" id="AAC73186">
    <property type="protein sequence ID" value="AAC73186"/>
    <property type="gene ID" value="b0075"/>
</dbReference>
<dbReference type="GeneID" id="93777360"/>
<dbReference type="GeneID" id="946072"/>
<dbReference type="KEGG" id="ecj:JW0074"/>
<dbReference type="KEGG" id="eco:b0075"/>
<dbReference type="PATRIC" id="fig|83333.103.peg.820"/>
<dbReference type="EchoBASE" id="EB1257"/>
<dbReference type="HOGENOM" id="CLU_221572_0_0_6"/>
<dbReference type="InParanoid" id="P0AD79"/>
<dbReference type="PhylomeDB" id="P0AD79"/>
<dbReference type="BioCyc" id="EcoCyc:EG11280-MONOMER"/>
<dbReference type="PRO" id="PR:P0AD79"/>
<dbReference type="Proteomes" id="UP000000625">
    <property type="component" value="Chromosome"/>
</dbReference>
<dbReference type="GO" id="GO:0009098">
    <property type="term" value="P:L-leucine biosynthetic process"/>
    <property type="evidence" value="ECO:0007669"/>
    <property type="project" value="UniProtKB-KW"/>
</dbReference>
<dbReference type="InterPro" id="IPR012570">
    <property type="entry name" value="Leu_leader"/>
</dbReference>
<dbReference type="NCBIfam" id="NF007397">
    <property type="entry name" value="PRK09925.1"/>
    <property type="match status" value="1"/>
</dbReference>
<dbReference type="Pfam" id="PF08054">
    <property type="entry name" value="Leu_leader"/>
    <property type="match status" value="1"/>
</dbReference>
<feature type="peptide" id="PRO_0000043995" description="leu operon leader peptide">
    <location>
        <begin position="1"/>
        <end position="28"/>
    </location>
</feature>
<name>LPL_ECOLI</name>
<keyword id="KW-0028">Amino-acid biosynthesis</keyword>
<keyword id="KW-0100">Branched-chain amino acid biosynthesis</keyword>
<keyword id="KW-0428">Leader peptide</keyword>
<keyword id="KW-0432">Leucine biosynthesis</keyword>
<keyword id="KW-1185">Reference proteome</keyword>
<accession>P0AD79</accession>
<accession>P09149</accession>
<accession>Q8VSS2</accession>
<accession>Q8VSS3</accession>
<gene>
    <name type="primary">leuL</name>
    <name type="synonym">leuLP</name>
    <name type="ordered locus">b0075</name>
    <name type="ordered locus">JW0074</name>
</gene>
<comment type="function">
    <text>Involved in control of the biosynthesis of leucine.</text>
</comment>
<protein>
    <recommendedName>
        <fullName>leu operon leader peptide</fullName>
    </recommendedName>
    <alternativeName>
        <fullName>leu operon attenuator peptide</fullName>
    </alternativeName>
</protein>
<sequence>MTHIVRFIGLLLLNASSLRGRRVSGIQH</sequence>
<proteinExistence type="predicted"/>
<organism>
    <name type="scientific">Escherichia coli (strain K12)</name>
    <dbReference type="NCBI Taxonomy" id="83333"/>
    <lineage>
        <taxon>Bacteria</taxon>
        <taxon>Pseudomonadati</taxon>
        <taxon>Pseudomonadota</taxon>
        <taxon>Gammaproteobacteria</taxon>
        <taxon>Enterobacterales</taxon>
        <taxon>Enterobacteriaceae</taxon>
        <taxon>Escherichia</taxon>
    </lineage>
</organism>